<accession>B4EKD5</accession>
<feature type="chain" id="PRO_1000188358" description="Enoyl-[acyl-carrier-protein] reductase [NADH]">
    <location>
        <begin position="1"/>
        <end position="400"/>
    </location>
</feature>
<feature type="active site" description="Proton donor" evidence="1">
    <location>
        <position position="235"/>
    </location>
</feature>
<feature type="binding site" evidence="1">
    <location>
        <begin position="48"/>
        <end position="53"/>
    </location>
    <ligand>
        <name>NAD(+)</name>
        <dbReference type="ChEBI" id="CHEBI:57540"/>
    </ligand>
</feature>
<feature type="binding site" evidence="1">
    <location>
        <begin position="74"/>
        <end position="75"/>
    </location>
    <ligand>
        <name>NAD(+)</name>
        <dbReference type="ChEBI" id="CHEBI:57540"/>
    </ligand>
</feature>
<feature type="binding site" evidence="1">
    <location>
        <begin position="111"/>
        <end position="112"/>
    </location>
    <ligand>
        <name>NAD(+)</name>
        <dbReference type="ChEBI" id="CHEBI:57540"/>
    </ligand>
</feature>
<feature type="binding site" evidence="1">
    <location>
        <begin position="139"/>
        <end position="140"/>
    </location>
    <ligand>
        <name>NAD(+)</name>
        <dbReference type="ChEBI" id="CHEBI:57540"/>
    </ligand>
</feature>
<feature type="binding site" evidence="1">
    <location>
        <position position="225"/>
    </location>
    <ligand>
        <name>substrate</name>
    </ligand>
</feature>
<feature type="binding site" evidence="1">
    <location>
        <position position="244"/>
    </location>
    <ligand>
        <name>NAD(+)</name>
        <dbReference type="ChEBI" id="CHEBI:57540"/>
    </ligand>
</feature>
<feature type="binding site" evidence="1">
    <location>
        <begin position="273"/>
        <end position="275"/>
    </location>
    <ligand>
        <name>NAD(+)</name>
        <dbReference type="ChEBI" id="CHEBI:57540"/>
    </ligand>
</feature>
<feature type="site" description="Plays an important role in discriminating NADH against NADPH" evidence="1">
    <location>
        <position position="75"/>
    </location>
</feature>
<sequence>MIIKPRVRGFICVTTHPVGCEANVKEQIDYVTSHGPIANGPKKVLVIGASTGYGLAARISAAFGSGADTLGVFFERAGSETKPGTAGWYNSAAFEKFATEKGLYARSINGDAFSDKVKQVTIDTIKQDLGKVDLVVYSLAAPRRTHPKTGETISSTLKPVGKAVTFRGLDTDKEVIREVSLEPATQEEIDGTVAVMGGEDWQMWIDALADAGVLADGAKTTAFTYLGEQITHDIYWNGSIGEAKKDLDKKVLSIRDKLAAHGGDARVSVLKAVVTQASSAIPMMPLYLSLLFKVMKEKGTHEGCIEQVYGLLKDSLYGATPHVDEEGRLRADYKELDPQVQNQVVAMWDKVTNENLYEMTDFAGYKTEFLRLFGFEIAGVDYDADVNPDVKIPGIIDTTV</sequence>
<protein>
    <recommendedName>
        <fullName evidence="1">Enoyl-[acyl-carrier-protein] reductase [NADH]</fullName>
        <shortName evidence="1">ENR</shortName>
        <ecNumber evidence="1">1.3.1.9</ecNumber>
    </recommendedName>
</protein>
<organism>
    <name type="scientific">Burkholderia cenocepacia (strain ATCC BAA-245 / DSM 16553 / LMG 16656 / NCTC 13227 / J2315 / CF5610)</name>
    <name type="common">Burkholderia cepacia (strain J2315)</name>
    <dbReference type="NCBI Taxonomy" id="216591"/>
    <lineage>
        <taxon>Bacteria</taxon>
        <taxon>Pseudomonadati</taxon>
        <taxon>Pseudomonadota</taxon>
        <taxon>Betaproteobacteria</taxon>
        <taxon>Burkholderiales</taxon>
        <taxon>Burkholderiaceae</taxon>
        <taxon>Burkholderia</taxon>
        <taxon>Burkholderia cepacia complex</taxon>
    </lineage>
</organism>
<dbReference type="EC" id="1.3.1.9" evidence="1"/>
<dbReference type="EMBL" id="AM747721">
    <property type="protein sequence ID" value="CAR56514.1"/>
    <property type="molecule type" value="Genomic_DNA"/>
</dbReference>
<dbReference type="RefSeq" id="WP_006483953.1">
    <property type="nucleotide sequence ID" value="NC_011001.1"/>
</dbReference>
<dbReference type="SMR" id="B4EKD5"/>
<dbReference type="GeneID" id="56563174"/>
<dbReference type="KEGG" id="bcj:BCAM2650"/>
<dbReference type="eggNOG" id="COG3007">
    <property type="taxonomic scope" value="Bacteria"/>
</dbReference>
<dbReference type="HOGENOM" id="CLU_057698_1_0_4"/>
<dbReference type="BioCyc" id="BCEN216591:G1G1V-6763-MONOMER"/>
<dbReference type="UniPathway" id="UPA00094"/>
<dbReference type="Proteomes" id="UP000001035">
    <property type="component" value="Chromosome 2"/>
</dbReference>
<dbReference type="GO" id="GO:0004318">
    <property type="term" value="F:enoyl-[acyl-carrier-protein] reductase (NADH) activity"/>
    <property type="evidence" value="ECO:0007669"/>
    <property type="project" value="UniProtKB-UniRule"/>
</dbReference>
<dbReference type="GO" id="GO:0051287">
    <property type="term" value="F:NAD binding"/>
    <property type="evidence" value="ECO:0007669"/>
    <property type="project" value="UniProtKB-UniRule"/>
</dbReference>
<dbReference type="GO" id="GO:0050343">
    <property type="term" value="F:trans-2-enoyl-CoA reductase (NADH) activity"/>
    <property type="evidence" value="ECO:0007669"/>
    <property type="project" value="TreeGrafter"/>
</dbReference>
<dbReference type="GO" id="GO:0006633">
    <property type="term" value="P:fatty acid biosynthetic process"/>
    <property type="evidence" value="ECO:0007669"/>
    <property type="project" value="UniProtKB-UniRule"/>
</dbReference>
<dbReference type="FunFam" id="3.40.50.720:FF:000221">
    <property type="entry name" value="Enoyl-[acyl-carrier-protein] reductase [NADH]"/>
    <property type="match status" value="1"/>
</dbReference>
<dbReference type="Gene3D" id="3.40.50.720">
    <property type="entry name" value="NAD(P)-binding Rossmann-like Domain"/>
    <property type="match status" value="1"/>
</dbReference>
<dbReference type="HAMAP" id="MF_01838">
    <property type="entry name" value="FabV_reductase"/>
    <property type="match status" value="1"/>
</dbReference>
<dbReference type="InterPro" id="IPR024906">
    <property type="entry name" value="Eno_Rdtase_FAD-bd_dom"/>
</dbReference>
<dbReference type="InterPro" id="IPR024910">
    <property type="entry name" value="Enoyl-CoA_Rdtase_cat_dom"/>
</dbReference>
<dbReference type="InterPro" id="IPR050048">
    <property type="entry name" value="FabV-like_NADH_b"/>
</dbReference>
<dbReference type="InterPro" id="IPR010758">
    <property type="entry name" value="Trans-2-enoyl-CoA_reductase"/>
</dbReference>
<dbReference type="NCBIfam" id="NF043048">
    <property type="entry name" value="EnoyACPredFabV"/>
    <property type="match status" value="1"/>
</dbReference>
<dbReference type="NCBIfam" id="NF010177">
    <property type="entry name" value="PRK13656.1"/>
    <property type="match status" value="1"/>
</dbReference>
<dbReference type="PANTHER" id="PTHR37480">
    <property type="entry name" value="ENOYL-[ACYL-CARRIER-PROTEIN] REDUCTASE [NADH]"/>
    <property type="match status" value="1"/>
</dbReference>
<dbReference type="PANTHER" id="PTHR37480:SF1">
    <property type="entry name" value="ENOYL-[ACYL-CARRIER-PROTEIN] REDUCTASE [NADH]"/>
    <property type="match status" value="1"/>
</dbReference>
<dbReference type="Pfam" id="PF07055">
    <property type="entry name" value="Eno-Rase_FAD_bd"/>
    <property type="match status" value="1"/>
</dbReference>
<dbReference type="Pfam" id="PF12242">
    <property type="entry name" value="Eno-Rase_NADH_b"/>
    <property type="match status" value="1"/>
</dbReference>
<dbReference type="Pfam" id="PF12241">
    <property type="entry name" value="Enoyl_reductase"/>
    <property type="match status" value="1"/>
</dbReference>
<keyword id="KW-0275">Fatty acid biosynthesis</keyword>
<keyword id="KW-0276">Fatty acid metabolism</keyword>
<keyword id="KW-0444">Lipid biosynthesis</keyword>
<keyword id="KW-0443">Lipid metabolism</keyword>
<keyword id="KW-0520">NAD</keyword>
<keyword id="KW-0560">Oxidoreductase</keyword>
<comment type="function">
    <text evidence="1">Involved in the final reduction of the elongation cycle of fatty acid synthesis (FAS II). Catalyzes the reduction of a carbon-carbon double bond in an enoyl moiety that is covalently linked to an acyl carrier protein (ACP).</text>
</comment>
<comment type="catalytic activity">
    <reaction evidence="1">
        <text>a 2,3-saturated acyl-[ACP] + NAD(+) = a (2E)-enoyl-[ACP] + NADH + H(+)</text>
        <dbReference type="Rhea" id="RHEA:10240"/>
        <dbReference type="Rhea" id="RHEA-COMP:9925"/>
        <dbReference type="Rhea" id="RHEA-COMP:9926"/>
        <dbReference type="ChEBI" id="CHEBI:15378"/>
        <dbReference type="ChEBI" id="CHEBI:57540"/>
        <dbReference type="ChEBI" id="CHEBI:57945"/>
        <dbReference type="ChEBI" id="CHEBI:78784"/>
        <dbReference type="ChEBI" id="CHEBI:78785"/>
        <dbReference type="EC" id="1.3.1.9"/>
    </reaction>
</comment>
<comment type="pathway">
    <text evidence="1">Lipid metabolism; fatty acid biosynthesis.</text>
</comment>
<comment type="subunit">
    <text evidence="1">Monomer.</text>
</comment>
<comment type="similarity">
    <text evidence="1">Belongs to the TER reductase family.</text>
</comment>
<evidence type="ECO:0000255" key="1">
    <source>
        <dbReference type="HAMAP-Rule" id="MF_01838"/>
    </source>
</evidence>
<reference key="1">
    <citation type="journal article" date="2009" name="J. Bacteriol.">
        <title>The genome of Burkholderia cenocepacia J2315, an epidemic pathogen of cystic fibrosis patients.</title>
        <authorList>
            <person name="Holden M.T."/>
            <person name="Seth-Smith H.M."/>
            <person name="Crossman L.C."/>
            <person name="Sebaihia M."/>
            <person name="Bentley S.D."/>
            <person name="Cerdeno-Tarraga A.M."/>
            <person name="Thomson N.R."/>
            <person name="Bason N."/>
            <person name="Quail M.A."/>
            <person name="Sharp S."/>
            <person name="Cherevach I."/>
            <person name="Churcher C."/>
            <person name="Goodhead I."/>
            <person name="Hauser H."/>
            <person name="Holroyd N."/>
            <person name="Mungall K."/>
            <person name="Scott P."/>
            <person name="Walker D."/>
            <person name="White B."/>
            <person name="Rose H."/>
            <person name="Iversen P."/>
            <person name="Mil-Homens D."/>
            <person name="Rocha E.P."/>
            <person name="Fialho A.M."/>
            <person name="Baldwin A."/>
            <person name="Dowson C."/>
            <person name="Barrell B.G."/>
            <person name="Govan J.R."/>
            <person name="Vandamme P."/>
            <person name="Hart C.A."/>
            <person name="Mahenthiralingam E."/>
            <person name="Parkhill J."/>
        </authorList>
    </citation>
    <scope>NUCLEOTIDE SEQUENCE [LARGE SCALE GENOMIC DNA]</scope>
    <source>
        <strain>ATCC BAA-245 / DSM 16553 / LMG 16656 / NCTC 13227 / J2315 / CF5610</strain>
    </source>
</reference>
<name>FABV_BURCJ</name>
<gene>
    <name evidence="1" type="primary">fabV</name>
    <name type="ordered locus">BceJ2315_60880</name>
    <name type="ORF">BCAM2650</name>
</gene>
<proteinExistence type="inferred from homology"/>